<proteinExistence type="inferred from homology"/>
<protein>
    <recommendedName>
        <fullName evidence="1">Adenine phosphoribosyltransferase</fullName>
        <shortName evidence="1">APRT</shortName>
        <ecNumber evidence="1">2.4.2.7</ecNumber>
    </recommendedName>
</protein>
<reference key="1">
    <citation type="submission" date="2006-03" db="EMBL/GenBank/DDBJ databases">
        <title>Complete genome sequence of Francisella tularensis LVS (Live Vaccine Strain).</title>
        <authorList>
            <person name="Chain P."/>
            <person name="Larimer F."/>
            <person name="Land M."/>
            <person name="Stilwagen S."/>
            <person name="Larsson P."/>
            <person name="Bearden S."/>
            <person name="Chu M."/>
            <person name="Oyston P."/>
            <person name="Forsman M."/>
            <person name="Andersson S."/>
            <person name="Lindler L."/>
            <person name="Titball R."/>
            <person name="Garcia E."/>
        </authorList>
    </citation>
    <scope>NUCLEOTIDE SEQUENCE [LARGE SCALE GENOMIC DNA]</scope>
    <source>
        <strain>LVS</strain>
    </source>
</reference>
<sequence>MNLDFIKSKIAAVPDFPKPGIMFRDITPLLADPQGLRKTAEAMAQELKNKGIQPTIIAGTESRGFIFGVALAEVLGLGFVPVRKPGKLPRATYSVKYDLEYGSDSLEIHQDAFKVTDEVLVVDDLLATGGTAKATVDLIEKTQAKVAGLIFVMELDSLGGREVLAGYNVSALIKF</sequence>
<accession>Q2A1J5</accession>
<gene>
    <name evidence="1" type="primary">apt</name>
    <name type="ordered locus">FTL_1782</name>
</gene>
<organism>
    <name type="scientific">Francisella tularensis subsp. holarctica (strain LVS)</name>
    <dbReference type="NCBI Taxonomy" id="376619"/>
    <lineage>
        <taxon>Bacteria</taxon>
        <taxon>Pseudomonadati</taxon>
        <taxon>Pseudomonadota</taxon>
        <taxon>Gammaproteobacteria</taxon>
        <taxon>Thiotrichales</taxon>
        <taxon>Francisellaceae</taxon>
        <taxon>Francisella</taxon>
    </lineage>
</organism>
<keyword id="KW-0963">Cytoplasm</keyword>
<keyword id="KW-0328">Glycosyltransferase</keyword>
<keyword id="KW-0660">Purine salvage</keyword>
<keyword id="KW-1185">Reference proteome</keyword>
<keyword id="KW-0808">Transferase</keyword>
<evidence type="ECO:0000255" key="1">
    <source>
        <dbReference type="HAMAP-Rule" id="MF_00004"/>
    </source>
</evidence>
<comment type="function">
    <text evidence="1">Catalyzes a salvage reaction resulting in the formation of AMP, that is energically less costly than de novo synthesis.</text>
</comment>
<comment type="catalytic activity">
    <reaction evidence="1">
        <text>AMP + diphosphate = 5-phospho-alpha-D-ribose 1-diphosphate + adenine</text>
        <dbReference type="Rhea" id="RHEA:16609"/>
        <dbReference type="ChEBI" id="CHEBI:16708"/>
        <dbReference type="ChEBI" id="CHEBI:33019"/>
        <dbReference type="ChEBI" id="CHEBI:58017"/>
        <dbReference type="ChEBI" id="CHEBI:456215"/>
        <dbReference type="EC" id="2.4.2.7"/>
    </reaction>
</comment>
<comment type="pathway">
    <text evidence="1">Purine metabolism; AMP biosynthesis via salvage pathway; AMP from adenine: step 1/1.</text>
</comment>
<comment type="subunit">
    <text evidence="1">Homodimer.</text>
</comment>
<comment type="subcellular location">
    <subcellularLocation>
        <location evidence="1">Cytoplasm</location>
    </subcellularLocation>
</comment>
<comment type="similarity">
    <text evidence="1">Belongs to the purine/pyrimidine phosphoribosyltransferase family.</text>
</comment>
<name>APT_FRATH</name>
<feature type="chain" id="PRO_1000000284" description="Adenine phosphoribosyltransferase">
    <location>
        <begin position="1"/>
        <end position="175"/>
    </location>
</feature>
<dbReference type="EC" id="2.4.2.7" evidence="1"/>
<dbReference type="EMBL" id="AM233362">
    <property type="protein sequence ID" value="CAJ80221.1"/>
    <property type="molecule type" value="Genomic_DNA"/>
</dbReference>
<dbReference type="RefSeq" id="WP_003017312.1">
    <property type="nucleotide sequence ID" value="NZ_CP009694.1"/>
</dbReference>
<dbReference type="SMR" id="Q2A1J5"/>
<dbReference type="KEGG" id="ftl:FTL_1782"/>
<dbReference type="UniPathway" id="UPA00588">
    <property type="reaction ID" value="UER00646"/>
</dbReference>
<dbReference type="Proteomes" id="UP000001944">
    <property type="component" value="Chromosome"/>
</dbReference>
<dbReference type="GO" id="GO:0005737">
    <property type="term" value="C:cytoplasm"/>
    <property type="evidence" value="ECO:0007669"/>
    <property type="project" value="UniProtKB-SubCell"/>
</dbReference>
<dbReference type="GO" id="GO:0002055">
    <property type="term" value="F:adenine binding"/>
    <property type="evidence" value="ECO:0007669"/>
    <property type="project" value="TreeGrafter"/>
</dbReference>
<dbReference type="GO" id="GO:0003999">
    <property type="term" value="F:adenine phosphoribosyltransferase activity"/>
    <property type="evidence" value="ECO:0007669"/>
    <property type="project" value="UniProtKB-UniRule"/>
</dbReference>
<dbReference type="GO" id="GO:0016208">
    <property type="term" value="F:AMP binding"/>
    <property type="evidence" value="ECO:0007669"/>
    <property type="project" value="TreeGrafter"/>
</dbReference>
<dbReference type="GO" id="GO:0006168">
    <property type="term" value="P:adenine salvage"/>
    <property type="evidence" value="ECO:0007669"/>
    <property type="project" value="InterPro"/>
</dbReference>
<dbReference type="GO" id="GO:0044209">
    <property type="term" value="P:AMP salvage"/>
    <property type="evidence" value="ECO:0007669"/>
    <property type="project" value="UniProtKB-UniRule"/>
</dbReference>
<dbReference type="GO" id="GO:0006166">
    <property type="term" value="P:purine ribonucleoside salvage"/>
    <property type="evidence" value="ECO:0007669"/>
    <property type="project" value="UniProtKB-KW"/>
</dbReference>
<dbReference type="CDD" id="cd06223">
    <property type="entry name" value="PRTases_typeI"/>
    <property type="match status" value="1"/>
</dbReference>
<dbReference type="FunFam" id="3.40.50.2020:FF:000004">
    <property type="entry name" value="Adenine phosphoribosyltransferase"/>
    <property type="match status" value="1"/>
</dbReference>
<dbReference type="Gene3D" id="3.40.50.2020">
    <property type="match status" value="1"/>
</dbReference>
<dbReference type="HAMAP" id="MF_00004">
    <property type="entry name" value="Aden_phosphoribosyltr"/>
    <property type="match status" value="1"/>
</dbReference>
<dbReference type="InterPro" id="IPR005764">
    <property type="entry name" value="Ade_phspho_trans"/>
</dbReference>
<dbReference type="InterPro" id="IPR000836">
    <property type="entry name" value="PRibTrfase_dom"/>
</dbReference>
<dbReference type="InterPro" id="IPR029057">
    <property type="entry name" value="PRTase-like"/>
</dbReference>
<dbReference type="InterPro" id="IPR050054">
    <property type="entry name" value="UPRTase/APRTase"/>
</dbReference>
<dbReference type="NCBIfam" id="TIGR01090">
    <property type="entry name" value="apt"/>
    <property type="match status" value="1"/>
</dbReference>
<dbReference type="NCBIfam" id="NF002634">
    <property type="entry name" value="PRK02304.1-3"/>
    <property type="match status" value="1"/>
</dbReference>
<dbReference type="NCBIfam" id="NF002636">
    <property type="entry name" value="PRK02304.1-5"/>
    <property type="match status" value="1"/>
</dbReference>
<dbReference type="PANTHER" id="PTHR32315">
    <property type="entry name" value="ADENINE PHOSPHORIBOSYLTRANSFERASE"/>
    <property type="match status" value="1"/>
</dbReference>
<dbReference type="PANTHER" id="PTHR32315:SF3">
    <property type="entry name" value="ADENINE PHOSPHORIBOSYLTRANSFERASE"/>
    <property type="match status" value="1"/>
</dbReference>
<dbReference type="Pfam" id="PF00156">
    <property type="entry name" value="Pribosyltran"/>
    <property type="match status" value="1"/>
</dbReference>
<dbReference type="SUPFAM" id="SSF53271">
    <property type="entry name" value="PRTase-like"/>
    <property type="match status" value="1"/>
</dbReference>
<dbReference type="PROSITE" id="PS00103">
    <property type="entry name" value="PUR_PYR_PR_TRANSFER"/>
    <property type="match status" value="1"/>
</dbReference>